<protein>
    <recommendedName>
        <fullName evidence="1">Large ribosomal subunit protein uL22</fullName>
    </recommendedName>
    <alternativeName>
        <fullName evidence="2">50S ribosomal protein L22</fullName>
    </alternativeName>
</protein>
<proteinExistence type="inferred from homology"/>
<accession>Q2N9B6</accession>
<keyword id="KW-1185">Reference proteome</keyword>
<keyword id="KW-0687">Ribonucleoprotein</keyword>
<keyword id="KW-0689">Ribosomal protein</keyword>
<keyword id="KW-0694">RNA-binding</keyword>
<keyword id="KW-0699">rRNA-binding</keyword>
<gene>
    <name evidence="1" type="primary">rplV</name>
    <name type="ordered locus">ELI_08165</name>
</gene>
<name>RL22_ERYLH</name>
<reference key="1">
    <citation type="journal article" date="2009" name="J. Bacteriol.">
        <title>Complete genome sequence of Erythrobacter litoralis HTCC2594.</title>
        <authorList>
            <person name="Oh H.M."/>
            <person name="Giovannoni S.J."/>
            <person name="Ferriera S."/>
            <person name="Johnson J."/>
            <person name="Cho J.C."/>
        </authorList>
    </citation>
    <scope>NUCLEOTIDE SEQUENCE [LARGE SCALE GENOMIC DNA]</scope>
    <source>
        <strain>HTCC2594</strain>
    </source>
</reference>
<evidence type="ECO:0000255" key="1">
    <source>
        <dbReference type="HAMAP-Rule" id="MF_01331"/>
    </source>
</evidence>
<evidence type="ECO:0000305" key="2"/>
<dbReference type="EMBL" id="CP000157">
    <property type="protein sequence ID" value="ABC63725.1"/>
    <property type="molecule type" value="Genomic_DNA"/>
</dbReference>
<dbReference type="RefSeq" id="WP_011414557.1">
    <property type="nucleotide sequence ID" value="NC_007722.1"/>
</dbReference>
<dbReference type="SMR" id="Q2N9B6"/>
<dbReference type="STRING" id="314225.ELI_08165"/>
<dbReference type="KEGG" id="eli:ELI_08165"/>
<dbReference type="eggNOG" id="COG0091">
    <property type="taxonomic scope" value="Bacteria"/>
</dbReference>
<dbReference type="HOGENOM" id="CLU_083987_3_0_5"/>
<dbReference type="OrthoDB" id="9805969at2"/>
<dbReference type="Proteomes" id="UP000008808">
    <property type="component" value="Chromosome"/>
</dbReference>
<dbReference type="GO" id="GO:0022625">
    <property type="term" value="C:cytosolic large ribosomal subunit"/>
    <property type="evidence" value="ECO:0007669"/>
    <property type="project" value="TreeGrafter"/>
</dbReference>
<dbReference type="GO" id="GO:0019843">
    <property type="term" value="F:rRNA binding"/>
    <property type="evidence" value="ECO:0007669"/>
    <property type="project" value="UniProtKB-UniRule"/>
</dbReference>
<dbReference type="GO" id="GO:0003735">
    <property type="term" value="F:structural constituent of ribosome"/>
    <property type="evidence" value="ECO:0007669"/>
    <property type="project" value="InterPro"/>
</dbReference>
<dbReference type="GO" id="GO:0006412">
    <property type="term" value="P:translation"/>
    <property type="evidence" value="ECO:0007669"/>
    <property type="project" value="UniProtKB-UniRule"/>
</dbReference>
<dbReference type="CDD" id="cd00336">
    <property type="entry name" value="Ribosomal_L22"/>
    <property type="match status" value="1"/>
</dbReference>
<dbReference type="Gene3D" id="3.90.470.10">
    <property type="entry name" value="Ribosomal protein L22/L17"/>
    <property type="match status" value="1"/>
</dbReference>
<dbReference type="HAMAP" id="MF_01331_B">
    <property type="entry name" value="Ribosomal_uL22_B"/>
    <property type="match status" value="1"/>
</dbReference>
<dbReference type="InterPro" id="IPR001063">
    <property type="entry name" value="Ribosomal_uL22"/>
</dbReference>
<dbReference type="InterPro" id="IPR005727">
    <property type="entry name" value="Ribosomal_uL22_bac/chlpt-type"/>
</dbReference>
<dbReference type="InterPro" id="IPR047867">
    <property type="entry name" value="Ribosomal_uL22_bac/org-type"/>
</dbReference>
<dbReference type="InterPro" id="IPR036394">
    <property type="entry name" value="Ribosomal_uL22_sf"/>
</dbReference>
<dbReference type="NCBIfam" id="TIGR01044">
    <property type="entry name" value="rplV_bact"/>
    <property type="match status" value="1"/>
</dbReference>
<dbReference type="PANTHER" id="PTHR13501">
    <property type="entry name" value="CHLOROPLAST 50S RIBOSOMAL PROTEIN L22-RELATED"/>
    <property type="match status" value="1"/>
</dbReference>
<dbReference type="PANTHER" id="PTHR13501:SF8">
    <property type="entry name" value="LARGE RIBOSOMAL SUBUNIT PROTEIN UL22M"/>
    <property type="match status" value="1"/>
</dbReference>
<dbReference type="Pfam" id="PF00237">
    <property type="entry name" value="Ribosomal_L22"/>
    <property type="match status" value="1"/>
</dbReference>
<dbReference type="SUPFAM" id="SSF54843">
    <property type="entry name" value="Ribosomal protein L22"/>
    <property type="match status" value="1"/>
</dbReference>
<sequence length="125" mass="13494">MGKAKSPRRVADNEALAVGTTIRGSAQKLNLVAELIRGKKAEEALNILAFSKKAMARDASKVLASAIANAENNHDLDVDALVVAEASVGKSITMKRFHTRGRGKSTRILKPFSKLRIVVREVEEA</sequence>
<comment type="function">
    <text evidence="1">This protein binds specifically to 23S rRNA; its binding is stimulated by other ribosomal proteins, e.g. L4, L17, and L20. It is important during the early stages of 50S assembly. It makes multiple contacts with different domains of the 23S rRNA in the assembled 50S subunit and ribosome (By similarity).</text>
</comment>
<comment type="function">
    <text evidence="1">The globular domain of the protein is located near the polypeptide exit tunnel on the outside of the subunit, while an extended beta-hairpin is found that lines the wall of the exit tunnel in the center of the 70S ribosome.</text>
</comment>
<comment type="subunit">
    <text evidence="1">Part of the 50S ribosomal subunit.</text>
</comment>
<comment type="similarity">
    <text evidence="1">Belongs to the universal ribosomal protein uL22 family.</text>
</comment>
<feature type="chain" id="PRO_0000354469" description="Large ribosomal subunit protein uL22">
    <location>
        <begin position="1"/>
        <end position="125"/>
    </location>
</feature>
<organism>
    <name type="scientific">Erythrobacter litoralis (strain HTCC2594)</name>
    <dbReference type="NCBI Taxonomy" id="314225"/>
    <lineage>
        <taxon>Bacteria</taxon>
        <taxon>Pseudomonadati</taxon>
        <taxon>Pseudomonadota</taxon>
        <taxon>Alphaproteobacteria</taxon>
        <taxon>Sphingomonadales</taxon>
        <taxon>Erythrobacteraceae</taxon>
        <taxon>Erythrobacter/Porphyrobacter group</taxon>
        <taxon>Erythrobacter</taxon>
    </lineage>
</organism>